<organism>
    <name type="scientific">Salmo salar</name>
    <name type="common">Atlantic salmon</name>
    <dbReference type="NCBI Taxonomy" id="8030"/>
    <lineage>
        <taxon>Eukaryota</taxon>
        <taxon>Metazoa</taxon>
        <taxon>Chordata</taxon>
        <taxon>Craniata</taxon>
        <taxon>Vertebrata</taxon>
        <taxon>Euteleostomi</taxon>
        <taxon>Actinopterygii</taxon>
        <taxon>Neopterygii</taxon>
        <taxon>Teleostei</taxon>
        <taxon>Protacanthopterygii</taxon>
        <taxon>Salmoniformes</taxon>
        <taxon>Salmonidae</taxon>
        <taxon>Salmoninae</taxon>
        <taxon>Salmo</taxon>
    </lineage>
</organism>
<sequence length="115" mass="12773">MSSENLSDTQMEYEDEKQDSQEKNANLVKGEEVKLKAKYPGLGQKPGGSDFLMKRLQKGQKYFDSGDYNMAKAKMKNKQLPVAGPDKNLVTGDHIPTPQDLPQRRSSLVTSKLAG</sequence>
<protein>
    <recommendedName>
        <fullName>Alpha-endosulfine</fullName>
    </recommendedName>
</protein>
<dbReference type="EMBL" id="BT049296">
    <property type="protein sequence ID" value="ACI69097.1"/>
    <property type="molecule type" value="mRNA"/>
</dbReference>
<dbReference type="RefSeq" id="NP_001135357.1">
    <property type="nucleotide sequence ID" value="NM_001141885.1"/>
</dbReference>
<dbReference type="RefSeq" id="XP_014056157.1">
    <property type="nucleotide sequence ID" value="XM_014200682.1"/>
</dbReference>
<dbReference type="SMR" id="B5XE27"/>
<dbReference type="STRING" id="8030.ENSSSAP00000021471"/>
<dbReference type="PaxDb" id="8030-ENSSSAP00000021471"/>
<dbReference type="Ensembl" id="ENSSSAT00020094058">
    <property type="protein sequence ID" value="ENSSSAP00020067350"/>
    <property type="gene ID" value="ENSSSAG00020045465"/>
</dbReference>
<dbReference type="Ensembl" id="ENSSSAT00020114540">
    <property type="protein sequence ID" value="ENSSSAP00020084843"/>
    <property type="gene ID" value="ENSSSAG00020052898"/>
</dbReference>
<dbReference type="Ensembl" id="ENSSSAT00070037088">
    <property type="protein sequence ID" value="ENSSSAP00070035357"/>
    <property type="gene ID" value="ENSSSAG00070023229"/>
</dbReference>
<dbReference type="Ensembl" id="ENSSSAT00070044787">
    <property type="protein sequence ID" value="ENSSSAP00070042899"/>
    <property type="gene ID" value="ENSSSAG00070027938"/>
</dbReference>
<dbReference type="Ensembl" id="ENSSSAT00075037068">
    <property type="protein sequence ID" value="ENSSSAP00075025961"/>
    <property type="gene ID" value="ENSSSAG00075017905"/>
</dbReference>
<dbReference type="Ensembl" id="ENSSSAT00075113192">
    <property type="protein sequence ID" value="ENSSSAP00075083739"/>
    <property type="gene ID" value="ENSSSAG00075053831"/>
</dbReference>
<dbReference type="GeneID" id="100196863"/>
<dbReference type="KEGG" id="sasa:100196863"/>
<dbReference type="KEGG" id="sasa:106580912"/>
<dbReference type="CTD" id="100317933"/>
<dbReference type="OMA" id="TNSEPAC"/>
<dbReference type="OrthoDB" id="568943at7898"/>
<dbReference type="Proteomes" id="UP000087266">
    <property type="component" value="Chromosome ssa02"/>
</dbReference>
<dbReference type="Proteomes" id="UP000087266">
    <property type="component" value="Chromosome ssa05"/>
</dbReference>
<dbReference type="Bgee" id="ENSSSAG00000010602">
    <property type="expression patterns" value="Expressed in muscle tissue and 27 other cell types or tissues"/>
</dbReference>
<dbReference type="GO" id="GO:0005737">
    <property type="term" value="C:cytoplasm"/>
    <property type="evidence" value="ECO:0007669"/>
    <property type="project" value="UniProtKB-SubCell"/>
</dbReference>
<dbReference type="GO" id="GO:0019212">
    <property type="term" value="F:phosphatase inhibitor activity"/>
    <property type="evidence" value="ECO:0000250"/>
    <property type="project" value="UniProtKB"/>
</dbReference>
<dbReference type="GO" id="GO:0051721">
    <property type="term" value="F:protein phosphatase 2A binding"/>
    <property type="evidence" value="ECO:0000250"/>
    <property type="project" value="UniProtKB"/>
</dbReference>
<dbReference type="GO" id="GO:0004864">
    <property type="term" value="F:protein phosphatase inhibitor activity"/>
    <property type="evidence" value="ECO:0007669"/>
    <property type="project" value="UniProtKB-KW"/>
</dbReference>
<dbReference type="GO" id="GO:0019888">
    <property type="term" value="F:protein phosphatase regulator activity"/>
    <property type="evidence" value="ECO:0000250"/>
    <property type="project" value="UniProtKB"/>
</dbReference>
<dbReference type="GO" id="GO:0051301">
    <property type="term" value="P:cell division"/>
    <property type="evidence" value="ECO:0007669"/>
    <property type="project" value="UniProtKB-KW"/>
</dbReference>
<dbReference type="GO" id="GO:0000086">
    <property type="term" value="P:G2/M transition of mitotic cell cycle"/>
    <property type="evidence" value="ECO:0000250"/>
    <property type="project" value="UniProtKB"/>
</dbReference>
<dbReference type="GO" id="GO:0000278">
    <property type="term" value="P:mitotic cell cycle"/>
    <property type="evidence" value="ECO:0000250"/>
    <property type="project" value="UniProtKB"/>
</dbReference>
<dbReference type="InterPro" id="IPR006760">
    <property type="entry name" value="Endosulphine"/>
</dbReference>
<dbReference type="PANTHER" id="PTHR10358:SF21">
    <property type="entry name" value="ALPHA-ENDOSULFINE"/>
    <property type="match status" value="1"/>
</dbReference>
<dbReference type="PANTHER" id="PTHR10358">
    <property type="entry name" value="ENDOSULFINE"/>
    <property type="match status" value="1"/>
</dbReference>
<dbReference type="Pfam" id="PF04667">
    <property type="entry name" value="Endosulfine"/>
    <property type="match status" value="1"/>
</dbReference>
<gene>
    <name type="primary">ensa</name>
</gene>
<accession>B5XE27</accession>
<keyword id="KW-0131">Cell cycle</keyword>
<keyword id="KW-0132">Cell division</keyword>
<keyword id="KW-0963">Cytoplasm</keyword>
<keyword id="KW-0498">Mitosis</keyword>
<keyword id="KW-0597">Phosphoprotein</keyword>
<keyword id="KW-0650">Protein phosphatase inhibitor</keyword>
<keyword id="KW-1185">Reference proteome</keyword>
<reference key="1">
    <citation type="journal article" date="2010" name="BMC Genomics">
        <title>Salmo salar and Esox lucius full-length cDNA sequences reveal changes in evolutionary pressures on a post-tetraploidization genome.</title>
        <authorList>
            <person name="Leong J.S."/>
            <person name="Jantzen S.G."/>
            <person name="von Schalburg K.R."/>
            <person name="Cooper G.A."/>
            <person name="Messmer A.M."/>
            <person name="Liao N.Y."/>
            <person name="Munro S."/>
            <person name="Moore R."/>
            <person name="Holt R.A."/>
            <person name="Jones S.J."/>
            <person name="Davidson W.S."/>
            <person name="Koop B.F."/>
        </authorList>
    </citation>
    <scope>NUCLEOTIDE SEQUENCE [LARGE SCALE MRNA]</scope>
    <source>
        <tissue>Brain</tissue>
    </source>
</reference>
<comment type="function">
    <text evidence="1">Protein phosphatase inhibitor that specifically inhibits protein phosphatase 2A (PP2A) during mitosis. When phosphorylated at Ser-67 during mitosis, specifically interacts with ppp2r2d (PR55-delta) and inhibits its activity, leading to inactivation of PP2A, an essential condition to keep cyclin-B1-CDK1 activity high during M phase (By similarity).</text>
</comment>
<comment type="subcellular location">
    <subcellularLocation>
        <location evidence="1">Cytoplasm</location>
    </subcellularLocation>
</comment>
<comment type="PTM">
    <text evidence="1">Phosphorylation at Ser-65 by gwl during mitosis is essential for interaction with ppp2r2d (PR55-delta) and subsequent inactivation of PP2A.</text>
</comment>
<comment type="similarity">
    <text evidence="3">Belongs to the endosulfine family.</text>
</comment>
<proteinExistence type="inferred from homology"/>
<evidence type="ECO:0000250" key="1"/>
<evidence type="ECO:0000256" key="2">
    <source>
        <dbReference type="SAM" id="MobiDB-lite"/>
    </source>
</evidence>
<evidence type="ECO:0000305" key="3"/>
<name>ENSA_SALSA</name>
<feature type="chain" id="PRO_0000371565" description="Alpha-endosulfine">
    <location>
        <begin position="1"/>
        <end position="115"/>
    </location>
</feature>
<feature type="region of interest" description="Disordered" evidence="2">
    <location>
        <begin position="1"/>
        <end position="27"/>
    </location>
</feature>
<feature type="region of interest" description="Disordered" evidence="2">
    <location>
        <begin position="77"/>
        <end position="115"/>
    </location>
</feature>
<feature type="compositionally biased region" description="Polar residues" evidence="2">
    <location>
        <begin position="1"/>
        <end position="10"/>
    </location>
</feature>
<feature type="compositionally biased region" description="Polar residues" evidence="2">
    <location>
        <begin position="104"/>
        <end position="115"/>
    </location>
</feature>
<feature type="modified residue" description="Phosphoserine; by GWL" evidence="1">
    <location>
        <position position="65"/>
    </location>
</feature>